<reference key="1">
    <citation type="journal article" date="2000" name="Nature">
        <title>The genome sequence of the thermoacidophilic scavenger Thermoplasma acidophilum.</title>
        <authorList>
            <person name="Ruepp A."/>
            <person name="Graml W."/>
            <person name="Santos-Martinez M.-L."/>
            <person name="Koretke K.K."/>
            <person name="Volker C."/>
            <person name="Mewes H.-W."/>
            <person name="Frishman D."/>
            <person name="Stocker S."/>
            <person name="Lupas A.N."/>
            <person name="Baumeister W."/>
        </authorList>
    </citation>
    <scope>NUCLEOTIDE SEQUENCE [LARGE SCALE GENOMIC DNA]</scope>
    <source>
        <strain>ATCC 25905 / DSM 1728 / JCM 9062 / NBRC 15155 / AMRC-C165</strain>
    </source>
</reference>
<reference key="2">
    <citation type="journal article" date="1999" name="J. Biol. Chem.">
        <title>Structural conservation of the isolated zinc site in archaeal zinc-containing ferredoxins as revealed by X-ray absorption spectroscopic analysis and its evolutionary implications.</title>
        <authorList>
            <person name="Cosper N.J."/>
            <person name="Stalhandske C.M.V."/>
            <person name="Iwasaki H."/>
            <person name="Oshima T."/>
            <person name="Scott R.A."/>
            <person name="Iwasaki T."/>
        </authorList>
    </citation>
    <scope>NUCLEOTIDE SEQUENCE [GENOMIC DNA]</scope>
    <scope>CHARACTERIZATION</scope>
    <scope>MASS SPECTROMETRY</scope>
    <source>
        <strain>HO-62</strain>
    </source>
</reference>
<reference key="3">
    <citation type="journal article" date="1983" name="FEBS Lett.">
        <title>Amino acid sequence of a ferredoxin from thermoacidophilic archaebacteria, Thermoplasma acidophilum.</title>
        <authorList>
            <person name="Wakabayashi S."/>
            <person name="Fujimoto N."/>
            <person name="Wada K."/>
            <person name="Matsubara H."/>
            <person name="Kerscher L."/>
            <person name="Oesterhelt D."/>
        </authorList>
    </citation>
    <scope>PROTEIN SEQUENCE OF 2-143</scope>
    <source>
        <strain>ATCC 25905 / DSM 1728 / JCM 9062 / NBRC 15155 / AMRC-C165</strain>
    </source>
</reference>
<reference key="4">
    <citation type="journal article" date="1997" name="J. Biol. Chem.">
        <title>Novel zinc-containing ferredoxin family in thermoacidophilic archaea.</title>
        <authorList>
            <person name="Iwasaki T."/>
            <person name="Suzuki T."/>
            <person name="Kon T."/>
            <person name="Imai T."/>
            <person name="Urushiyama A."/>
            <person name="Ohmori D."/>
            <person name="Oshima T."/>
        </authorList>
    </citation>
    <scope>PROTEIN SEQUENCE OF 2-16</scope>
    <scope>CHARACTERIZATION</scope>
    <source>
        <strain>HO-62</strain>
    </source>
</reference>
<accession>P00218</accession>
<accession>Q9V304</accession>
<dbReference type="EMBL" id="AL445067">
    <property type="protein sequence ID" value="CAC12568.1"/>
    <property type="molecule type" value="Genomic_DNA"/>
</dbReference>
<dbReference type="EMBL" id="AB023294">
    <property type="protein sequence ID" value="BAA82797.1"/>
    <property type="molecule type" value="Genomic_DNA"/>
</dbReference>
<dbReference type="PIR" id="T37333">
    <property type="entry name" value="FEYTA"/>
</dbReference>
<dbReference type="RefSeq" id="WP_052295737.1">
    <property type="nucleotide sequence ID" value="NC_002578.1"/>
</dbReference>
<dbReference type="SMR" id="P00218"/>
<dbReference type="STRING" id="273075.gene:9572677"/>
<dbReference type="PaxDb" id="273075-Ta1448m"/>
<dbReference type="EnsemblBacteria" id="CAC12568">
    <property type="protein sequence ID" value="CAC12568"/>
    <property type="gene ID" value="CAC12568"/>
</dbReference>
<dbReference type="KEGG" id="tac:Ta1448"/>
<dbReference type="eggNOG" id="arCOG04548">
    <property type="taxonomic scope" value="Archaea"/>
</dbReference>
<dbReference type="HOGENOM" id="CLU_1507315_0_0_2"/>
<dbReference type="InParanoid" id="P00218"/>
<dbReference type="OrthoDB" id="23833at2157"/>
<dbReference type="Proteomes" id="UP000001024">
    <property type="component" value="Chromosome"/>
</dbReference>
<dbReference type="GO" id="GO:0051538">
    <property type="term" value="F:3 iron, 4 sulfur cluster binding"/>
    <property type="evidence" value="ECO:0007669"/>
    <property type="project" value="UniProtKB-KW"/>
</dbReference>
<dbReference type="GO" id="GO:0051539">
    <property type="term" value="F:4 iron, 4 sulfur cluster binding"/>
    <property type="evidence" value="ECO:0007669"/>
    <property type="project" value="UniProtKB-KW"/>
</dbReference>
<dbReference type="GO" id="GO:0009055">
    <property type="term" value="F:electron transfer activity"/>
    <property type="evidence" value="ECO:0007669"/>
    <property type="project" value="InterPro"/>
</dbReference>
<dbReference type="GO" id="GO:0016491">
    <property type="term" value="F:oxidoreductase activity"/>
    <property type="evidence" value="ECO:0007669"/>
    <property type="project" value="UniProtKB-ARBA"/>
</dbReference>
<dbReference type="GO" id="GO:0008270">
    <property type="term" value="F:zinc ion binding"/>
    <property type="evidence" value="ECO:0007669"/>
    <property type="project" value="InterPro"/>
</dbReference>
<dbReference type="Gene3D" id="3.30.70.20">
    <property type="match status" value="1"/>
</dbReference>
<dbReference type="InterPro" id="IPR017896">
    <property type="entry name" value="4Fe4S_Fe-S-bd"/>
</dbReference>
<dbReference type="InterPro" id="IPR017900">
    <property type="entry name" value="4Fe4S_Fe_S_CS"/>
</dbReference>
<dbReference type="InterPro" id="IPR009157">
    <property type="entry name" value="Fd_Zn-bd"/>
</dbReference>
<dbReference type="InterPro" id="IPR050572">
    <property type="entry name" value="Fe-S_Ferredoxin"/>
</dbReference>
<dbReference type="InterPro" id="IPR053687">
    <property type="entry name" value="Zinc-ferredoxin"/>
</dbReference>
<dbReference type="NCBIfam" id="NF041165">
    <property type="entry name" value="ZFX_Thplmales"/>
    <property type="match status" value="1"/>
</dbReference>
<dbReference type="PANTHER" id="PTHR43687">
    <property type="entry name" value="ADENYLYLSULFATE REDUCTASE, BETA SUBUNIT"/>
    <property type="match status" value="1"/>
</dbReference>
<dbReference type="PANTHER" id="PTHR43687:SF6">
    <property type="entry name" value="L-ASPARTATE SEMIALDEHYDE SULFURTRANSFERASE IRON-SULFUR SUBUNIT"/>
    <property type="match status" value="1"/>
</dbReference>
<dbReference type="Pfam" id="PF00037">
    <property type="entry name" value="Fer4"/>
    <property type="match status" value="2"/>
</dbReference>
<dbReference type="PIRSF" id="PIRSF000068">
    <property type="entry name" value="Zn_Fdx_Sulfol"/>
    <property type="match status" value="1"/>
</dbReference>
<dbReference type="SUPFAM" id="SSF54862">
    <property type="entry name" value="4Fe-4S ferredoxins"/>
    <property type="match status" value="1"/>
</dbReference>
<dbReference type="PROSITE" id="PS00198">
    <property type="entry name" value="4FE4S_FER_1"/>
    <property type="match status" value="1"/>
</dbReference>
<dbReference type="PROSITE" id="PS51379">
    <property type="entry name" value="4FE4S_FER_2"/>
    <property type="match status" value="2"/>
</dbReference>
<gene>
    <name type="primary">zfx</name>
    <name type="ordered locus">Ta1448</name>
</gene>
<sequence length="143" mass="16093">MVKLEELDFKPKPIDEHFLENDKDYPVTGQHNGHDVRAEGMQRLDADGKPYPTKLGIHGTHVAVDWDCCIADGACMDVCPVNLYEWNLNPGKSGTGNDHKIQKGSEEWNKYRTDKCDPVRESDCIFCMACESVCPVRAIKITP</sequence>
<comment type="function">
    <text>Ferredoxins are iron-sulfur proteins that transfer electrons in a wide variety of metabolic reactions.</text>
</comment>
<comment type="cofactor">
    <cofactor>
        <name>[3Fe-4S] cluster</name>
        <dbReference type="ChEBI" id="CHEBI:21137"/>
    </cofactor>
    <text>Binds 1 [3Fe-4S] cluster.</text>
</comment>
<comment type="cofactor">
    <cofactor>
        <name>[4Fe-4S] cluster</name>
        <dbReference type="ChEBI" id="CHEBI:49883"/>
    </cofactor>
    <text>Binds 1 [4Fe-4S] cluster.</text>
</comment>
<comment type="cofactor">
    <cofactor>
        <name>Zn(2+)</name>
        <dbReference type="ChEBI" id="CHEBI:29105"/>
    </cofactor>
    <text>Binds 1 zinc ion.</text>
</comment>
<comment type="mass spectrometry" mass="15961.0" error="10.0" method="MALDI" evidence="2"/>
<evidence type="ECO:0000255" key="1">
    <source>
        <dbReference type="PROSITE-ProRule" id="PRU00711"/>
    </source>
</evidence>
<evidence type="ECO:0000269" key="2">
    <source>
    </source>
</evidence>
<evidence type="ECO:0000269" key="3">
    <source>
    </source>
</evidence>
<evidence type="ECO:0000269" key="4">
    <source ref="3"/>
</evidence>
<evidence type="ECO:0000305" key="5"/>
<organism>
    <name type="scientific">Thermoplasma acidophilum (strain ATCC 25905 / DSM 1728 / JCM 9062 / NBRC 15155 / AMRC-C165)</name>
    <dbReference type="NCBI Taxonomy" id="273075"/>
    <lineage>
        <taxon>Archaea</taxon>
        <taxon>Methanobacteriati</taxon>
        <taxon>Thermoplasmatota</taxon>
        <taxon>Thermoplasmata</taxon>
        <taxon>Thermoplasmatales</taxon>
        <taxon>Thermoplasmataceae</taxon>
        <taxon>Thermoplasma</taxon>
    </lineage>
</organism>
<name>FER_THEAC</name>
<keyword id="KW-0003">3Fe-4S</keyword>
<keyword id="KW-0004">4Fe-4S</keyword>
<keyword id="KW-0903">Direct protein sequencing</keyword>
<keyword id="KW-0249">Electron transport</keyword>
<keyword id="KW-0408">Iron</keyword>
<keyword id="KW-0411">Iron-sulfur</keyword>
<keyword id="KW-0479">Metal-binding</keyword>
<keyword id="KW-1185">Reference proteome</keyword>
<keyword id="KW-0677">Repeat</keyword>
<keyword id="KW-0813">Transport</keyword>
<keyword id="KW-0862">Zinc</keyword>
<protein>
    <recommendedName>
        <fullName>Zinc-containing ferredoxin</fullName>
    </recommendedName>
</protein>
<feature type="initiator methionine" description="Removed" evidence="3 4">
    <location>
        <position position="1"/>
    </location>
</feature>
<feature type="chain" id="PRO_0000159182" description="Zinc-containing ferredoxin">
    <location>
        <begin position="2"/>
        <end position="143"/>
    </location>
</feature>
<feature type="domain" description="4Fe-4S ferredoxin-type 1" evidence="1">
    <location>
        <begin position="60"/>
        <end position="89"/>
    </location>
</feature>
<feature type="domain" description="4Fe-4S ferredoxin-type 2" evidence="1">
    <location>
        <begin position="115"/>
        <end position="143"/>
    </location>
</feature>
<feature type="region of interest" description="N-terminal extension">
    <location>
        <begin position="13"/>
        <end position="60"/>
    </location>
</feature>
<feature type="binding site" evidence="5">
    <location>
        <position position="31"/>
    </location>
    <ligand>
        <name>Zn(2+)</name>
        <dbReference type="ChEBI" id="CHEBI:29105"/>
    </ligand>
</feature>
<feature type="binding site" evidence="5">
    <location>
        <position position="34"/>
    </location>
    <ligand>
        <name>Zn(2+)</name>
        <dbReference type="ChEBI" id="CHEBI:29105"/>
    </ligand>
</feature>
<feature type="binding site" evidence="5">
    <location>
        <position position="58"/>
    </location>
    <ligand>
        <name>Zn(2+)</name>
        <dbReference type="ChEBI" id="CHEBI:29105"/>
    </ligand>
</feature>
<feature type="binding site" evidence="5">
    <location>
        <position position="69"/>
    </location>
    <ligand>
        <name>[3Fe-4S] cluster</name>
        <dbReference type="ChEBI" id="CHEBI:21137"/>
    </ligand>
</feature>
<feature type="binding site" evidence="5">
    <location>
        <position position="75"/>
    </location>
    <ligand>
        <name>[3Fe-4S] cluster</name>
        <dbReference type="ChEBI" id="CHEBI:21137"/>
    </ligand>
</feature>
<feature type="binding site" evidence="5">
    <location>
        <position position="79"/>
    </location>
    <ligand>
        <name>[4Fe-4S] cluster</name>
        <dbReference type="ChEBI" id="CHEBI:49883"/>
    </ligand>
</feature>
<feature type="binding site" evidence="5">
    <location>
        <position position="117"/>
    </location>
    <ligand>
        <name>Zn(2+)</name>
        <dbReference type="ChEBI" id="CHEBI:29105"/>
    </ligand>
</feature>
<feature type="binding site" evidence="5">
    <location>
        <position position="124"/>
    </location>
    <ligand>
        <name>[4Fe-4S] cluster</name>
        <dbReference type="ChEBI" id="CHEBI:49883"/>
    </ligand>
</feature>
<feature type="binding site" evidence="5">
    <location>
        <position position="127"/>
    </location>
    <ligand>
        <name>[4Fe-4S] cluster</name>
        <dbReference type="ChEBI" id="CHEBI:49883"/>
    </ligand>
</feature>
<feature type="binding site" evidence="5">
    <location>
        <position position="130"/>
    </location>
    <ligand>
        <name>[4Fe-4S] cluster</name>
        <dbReference type="ChEBI" id="CHEBI:49883"/>
    </ligand>
</feature>
<feature type="binding site" evidence="5">
    <location>
        <position position="134"/>
    </location>
    <ligand>
        <name>[3Fe-4S] cluster</name>
        <dbReference type="ChEBI" id="CHEBI:21137"/>
    </ligand>
</feature>
<feature type="sequence variant" description="In strain: HO-62.">
    <original>Q</original>
    <variation>E</variation>
    <location>
        <position position="102"/>
    </location>
</feature>
<feature type="sequence variant" description="In strain: HO-62.">
    <original>E</original>
    <variation>A</variation>
    <location>
        <position position="106"/>
    </location>
</feature>
<proteinExistence type="evidence at protein level"/>